<reference key="1">
    <citation type="submission" date="2007-07" db="EMBL/GenBank/DDBJ databases">
        <title>Complete sequence of Fervidobacterium nodosum Rt17-B1.</title>
        <authorList>
            <consortium name="US DOE Joint Genome Institute"/>
            <person name="Copeland A."/>
            <person name="Lucas S."/>
            <person name="Lapidus A."/>
            <person name="Barry K."/>
            <person name="Glavina del Rio T."/>
            <person name="Dalin E."/>
            <person name="Tice H."/>
            <person name="Pitluck S."/>
            <person name="Saunders E."/>
            <person name="Brettin T."/>
            <person name="Bruce D."/>
            <person name="Detter J.C."/>
            <person name="Han C."/>
            <person name="Schmutz J."/>
            <person name="Larimer F."/>
            <person name="Land M."/>
            <person name="Hauser L."/>
            <person name="Kyrpides N."/>
            <person name="Mikhailova N."/>
            <person name="Nelson K."/>
            <person name="Gogarten J.P."/>
            <person name="Noll K."/>
            <person name="Richardson P."/>
        </authorList>
    </citation>
    <scope>NUCLEOTIDE SEQUENCE [LARGE SCALE GENOMIC DNA]</scope>
    <source>
        <strain>ATCC 35602 / DSM 5306 / Rt17-B1</strain>
    </source>
</reference>
<comment type="function">
    <text evidence="1">Could be involved in insertion of integral membrane proteins into the membrane.</text>
</comment>
<comment type="subcellular location">
    <subcellularLocation>
        <location evidence="1">Cell inner membrane</location>
        <topology evidence="1">Peripheral membrane protein</topology>
        <orientation evidence="1">Cytoplasmic side</orientation>
    </subcellularLocation>
</comment>
<comment type="similarity">
    <text evidence="1">Belongs to the UPF0161 family.</text>
</comment>
<gene>
    <name type="ordered locus">Fnod_1039</name>
</gene>
<name>YIDD_FERNB</name>
<organism>
    <name type="scientific">Fervidobacterium nodosum (strain ATCC 35602 / DSM 5306 / Rt17-B1)</name>
    <dbReference type="NCBI Taxonomy" id="381764"/>
    <lineage>
        <taxon>Bacteria</taxon>
        <taxon>Thermotogati</taxon>
        <taxon>Thermotogota</taxon>
        <taxon>Thermotogae</taxon>
        <taxon>Thermotogales</taxon>
        <taxon>Fervidobacteriaceae</taxon>
        <taxon>Fervidobacterium</taxon>
    </lineage>
</organism>
<accession>A7HLV5</accession>
<feature type="chain" id="PRO_1000072202" description="Putative membrane protein insertion efficiency factor">
    <location>
        <begin position="1"/>
        <end position="85"/>
    </location>
</feature>
<dbReference type="EMBL" id="CP000771">
    <property type="protein sequence ID" value="ABS60888.1"/>
    <property type="molecule type" value="Genomic_DNA"/>
</dbReference>
<dbReference type="RefSeq" id="WP_011994202.1">
    <property type="nucleotide sequence ID" value="NC_009718.1"/>
</dbReference>
<dbReference type="STRING" id="381764.Fnod_1039"/>
<dbReference type="KEGG" id="fno:Fnod_1039"/>
<dbReference type="eggNOG" id="COG0759">
    <property type="taxonomic scope" value="Bacteria"/>
</dbReference>
<dbReference type="HOGENOM" id="CLU_144811_6_0_0"/>
<dbReference type="OrthoDB" id="9801753at2"/>
<dbReference type="Proteomes" id="UP000002415">
    <property type="component" value="Chromosome"/>
</dbReference>
<dbReference type="GO" id="GO:0005886">
    <property type="term" value="C:plasma membrane"/>
    <property type="evidence" value="ECO:0007669"/>
    <property type="project" value="UniProtKB-SubCell"/>
</dbReference>
<dbReference type="HAMAP" id="MF_00386">
    <property type="entry name" value="UPF0161_YidD"/>
    <property type="match status" value="1"/>
</dbReference>
<dbReference type="InterPro" id="IPR002696">
    <property type="entry name" value="Membr_insert_effic_factor_YidD"/>
</dbReference>
<dbReference type="NCBIfam" id="TIGR00278">
    <property type="entry name" value="membrane protein insertion efficiency factor YidD"/>
    <property type="match status" value="1"/>
</dbReference>
<dbReference type="PANTHER" id="PTHR33383">
    <property type="entry name" value="MEMBRANE PROTEIN INSERTION EFFICIENCY FACTOR-RELATED"/>
    <property type="match status" value="1"/>
</dbReference>
<dbReference type="PANTHER" id="PTHR33383:SF1">
    <property type="entry name" value="MEMBRANE PROTEIN INSERTION EFFICIENCY FACTOR-RELATED"/>
    <property type="match status" value="1"/>
</dbReference>
<dbReference type="Pfam" id="PF01809">
    <property type="entry name" value="YidD"/>
    <property type="match status" value="1"/>
</dbReference>
<dbReference type="SMART" id="SM01234">
    <property type="entry name" value="Haemolytic"/>
    <property type="match status" value="1"/>
</dbReference>
<evidence type="ECO:0000255" key="1">
    <source>
        <dbReference type="HAMAP-Rule" id="MF_00386"/>
    </source>
</evidence>
<protein>
    <recommendedName>
        <fullName evidence="1">Putative membrane protein insertion efficiency factor</fullName>
    </recommendedName>
</protein>
<proteinExistence type="inferred from homology"/>
<keyword id="KW-0997">Cell inner membrane</keyword>
<keyword id="KW-1003">Cell membrane</keyword>
<keyword id="KW-0472">Membrane</keyword>
<keyword id="KW-1185">Reference proteome</keyword>
<sequence>MRKVILKLIRFYQKYISPLKPPTCRFEPTCSTYTYQAVERFGILKGLLLGFWRVLRCNPISKGGHDPVPTEFYLFKKSNNSLRRR</sequence>